<organism>
    <name type="scientific">Clostridium tetani (strain Massachusetts / E88)</name>
    <dbReference type="NCBI Taxonomy" id="212717"/>
    <lineage>
        <taxon>Bacteria</taxon>
        <taxon>Bacillati</taxon>
        <taxon>Bacillota</taxon>
        <taxon>Clostridia</taxon>
        <taxon>Eubacteriales</taxon>
        <taxon>Clostridiaceae</taxon>
        <taxon>Clostridium</taxon>
    </lineage>
</organism>
<proteinExistence type="inferred from homology"/>
<dbReference type="EC" id="2.1.1.-"/>
<dbReference type="EMBL" id="AE015927">
    <property type="protein sequence ID" value="AAO36450.1"/>
    <property type="molecule type" value="Genomic_DNA"/>
</dbReference>
<dbReference type="SMR" id="Q892Z2"/>
<dbReference type="STRING" id="212717.CTC_01941"/>
<dbReference type="KEGG" id="ctc:CTC_01941"/>
<dbReference type="HOGENOM" id="CLU_014689_7_2_9"/>
<dbReference type="Proteomes" id="UP000001412">
    <property type="component" value="Chromosome"/>
</dbReference>
<dbReference type="GO" id="GO:0051539">
    <property type="term" value="F:4 iron, 4 sulfur cluster binding"/>
    <property type="evidence" value="ECO:0007669"/>
    <property type="project" value="UniProtKB-KW"/>
</dbReference>
<dbReference type="GO" id="GO:0046872">
    <property type="term" value="F:metal ion binding"/>
    <property type="evidence" value="ECO:0007669"/>
    <property type="project" value="UniProtKB-KW"/>
</dbReference>
<dbReference type="GO" id="GO:0070041">
    <property type="term" value="F:rRNA (uridine-C5-)-methyltransferase activity"/>
    <property type="evidence" value="ECO:0007669"/>
    <property type="project" value="TreeGrafter"/>
</dbReference>
<dbReference type="GO" id="GO:0070475">
    <property type="term" value="P:rRNA base methylation"/>
    <property type="evidence" value="ECO:0007669"/>
    <property type="project" value="TreeGrafter"/>
</dbReference>
<dbReference type="CDD" id="cd02440">
    <property type="entry name" value="AdoMet_MTases"/>
    <property type="match status" value="1"/>
</dbReference>
<dbReference type="FunFam" id="3.40.50.150:FF:000009">
    <property type="entry name" value="23S rRNA (Uracil(1939)-C(5))-methyltransferase RlmD"/>
    <property type="match status" value="1"/>
</dbReference>
<dbReference type="Gene3D" id="2.40.50.1070">
    <property type="match status" value="1"/>
</dbReference>
<dbReference type="Gene3D" id="2.40.50.140">
    <property type="entry name" value="Nucleic acid-binding proteins"/>
    <property type="match status" value="1"/>
</dbReference>
<dbReference type="Gene3D" id="3.40.50.150">
    <property type="entry name" value="Vaccinia Virus protein VP39"/>
    <property type="match status" value="1"/>
</dbReference>
<dbReference type="InterPro" id="IPR030390">
    <property type="entry name" value="MeTrfase_TrmA_AS"/>
</dbReference>
<dbReference type="InterPro" id="IPR012340">
    <property type="entry name" value="NA-bd_OB-fold"/>
</dbReference>
<dbReference type="InterPro" id="IPR029063">
    <property type="entry name" value="SAM-dependent_MTases_sf"/>
</dbReference>
<dbReference type="InterPro" id="IPR002792">
    <property type="entry name" value="TRAM_dom"/>
</dbReference>
<dbReference type="InterPro" id="IPR010280">
    <property type="entry name" value="U5_MeTrfase_fam"/>
</dbReference>
<dbReference type="NCBIfam" id="TIGR00479">
    <property type="entry name" value="rumA"/>
    <property type="match status" value="1"/>
</dbReference>
<dbReference type="PANTHER" id="PTHR11061">
    <property type="entry name" value="RNA M5U METHYLTRANSFERASE"/>
    <property type="match status" value="1"/>
</dbReference>
<dbReference type="PANTHER" id="PTHR11061:SF30">
    <property type="entry name" value="TRNA (URACIL(54)-C(5))-METHYLTRANSFERASE"/>
    <property type="match status" value="1"/>
</dbReference>
<dbReference type="Pfam" id="PF01938">
    <property type="entry name" value="TRAM"/>
    <property type="match status" value="1"/>
</dbReference>
<dbReference type="Pfam" id="PF05958">
    <property type="entry name" value="tRNA_U5-meth_tr"/>
    <property type="match status" value="1"/>
</dbReference>
<dbReference type="SUPFAM" id="SSF50249">
    <property type="entry name" value="Nucleic acid-binding proteins"/>
    <property type="match status" value="1"/>
</dbReference>
<dbReference type="SUPFAM" id="SSF53335">
    <property type="entry name" value="S-adenosyl-L-methionine-dependent methyltransferases"/>
    <property type="match status" value="1"/>
</dbReference>
<dbReference type="PROSITE" id="PS51687">
    <property type="entry name" value="SAM_MT_RNA_M5U"/>
    <property type="match status" value="1"/>
</dbReference>
<dbReference type="PROSITE" id="PS50926">
    <property type="entry name" value="TRAM"/>
    <property type="match status" value="1"/>
</dbReference>
<dbReference type="PROSITE" id="PS01230">
    <property type="entry name" value="TRMA_1"/>
    <property type="match status" value="1"/>
</dbReference>
<sequence>MAMRKGKEYELNIEEIEFPSMGIAYHEGLKVYVKHGIPGQKVLARITTKKKDHAKGKIIEVLEDLPYKIEAKCPAFGQCGGCAHQDIPYEKQLEIKQHEILELFKKANLDGFDFLPIEGSPKQYEYRNKMEFTFGDLKKGGELNLGMHAKGMSFGIISADECKIVDEDYRNILNATLNYFREKQLPHYRIMAREGYLRNLVIRKAENTGEVLVNLVTTSQIDFNLDEYTEIIKSINYKGNLVGILHTINDSLSDVVQCDKLNILYGRDYIIEDLLGLKFKITPLSFFQTNSKGAEKLYSIVRDFIGESKSKTVFDLYCGTGTIGQIVAPEAKKVIGIELIEEAVESARENAKLNNLNNCEFIAGDIAQVIKEVKQKPDVIILDPPRPGVHPKALEYVIKFDSPTIVYVSCNPKTLVEDLKVLVENGYVIEKVKGMDMFPSTPHVETVVGLRRKDTL</sequence>
<name>Y1941_CLOTE</name>
<protein>
    <recommendedName>
        <fullName>Uncharacterized RNA methyltransferase CTC_01941</fullName>
        <ecNumber>2.1.1.-</ecNumber>
    </recommendedName>
</protein>
<keyword id="KW-0004">4Fe-4S</keyword>
<keyword id="KW-0408">Iron</keyword>
<keyword id="KW-0411">Iron-sulfur</keyword>
<keyword id="KW-0479">Metal-binding</keyword>
<keyword id="KW-0489">Methyltransferase</keyword>
<keyword id="KW-1185">Reference proteome</keyword>
<keyword id="KW-0949">S-adenosyl-L-methionine</keyword>
<keyword id="KW-0808">Transferase</keyword>
<reference key="1">
    <citation type="journal article" date="2003" name="Proc. Natl. Acad. Sci. U.S.A.">
        <title>The genome sequence of Clostridium tetani, the causative agent of tetanus disease.</title>
        <authorList>
            <person name="Brueggemann H."/>
            <person name="Baeumer S."/>
            <person name="Fricke W.F."/>
            <person name="Wiezer A."/>
            <person name="Liesegang H."/>
            <person name="Decker I."/>
            <person name="Herzberg C."/>
            <person name="Martinez-Arias R."/>
            <person name="Merkl R."/>
            <person name="Henne A."/>
            <person name="Gottschalk G."/>
        </authorList>
    </citation>
    <scope>NUCLEOTIDE SEQUENCE [LARGE SCALE GENOMIC DNA]</scope>
    <source>
        <strain>Massachusetts / E88</strain>
    </source>
</reference>
<gene>
    <name type="ordered locus">CTC_01941</name>
</gene>
<feature type="chain" id="PRO_0000161972" description="Uncharacterized RNA methyltransferase CTC_01941">
    <location>
        <begin position="1"/>
        <end position="456"/>
    </location>
</feature>
<feature type="domain" description="TRAM" evidence="2">
    <location>
        <begin position="2"/>
        <end position="60"/>
    </location>
</feature>
<feature type="active site" description="Nucleophile" evidence="3">
    <location>
        <position position="410"/>
    </location>
</feature>
<feature type="binding site" evidence="1">
    <location>
        <position position="73"/>
    </location>
    <ligand>
        <name>[4Fe-4S] cluster</name>
        <dbReference type="ChEBI" id="CHEBI:49883"/>
    </ligand>
</feature>
<feature type="binding site" evidence="1">
    <location>
        <position position="79"/>
    </location>
    <ligand>
        <name>[4Fe-4S] cluster</name>
        <dbReference type="ChEBI" id="CHEBI:49883"/>
    </ligand>
</feature>
<feature type="binding site" evidence="1">
    <location>
        <position position="82"/>
    </location>
    <ligand>
        <name>[4Fe-4S] cluster</name>
        <dbReference type="ChEBI" id="CHEBI:49883"/>
    </ligand>
</feature>
<feature type="binding site" evidence="1">
    <location>
        <position position="162"/>
    </location>
    <ligand>
        <name>[4Fe-4S] cluster</name>
        <dbReference type="ChEBI" id="CHEBI:49883"/>
    </ligand>
</feature>
<feature type="binding site" evidence="3">
    <location>
        <position position="288"/>
    </location>
    <ligand>
        <name>S-adenosyl-L-methionine</name>
        <dbReference type="ChEBI" id="CHEBI:59789"/>
    </ligand>
</feature>
<feature type="binding site" evidence="3">
    <location>
        <position position="317"/>
    </location>
    <ligand>
        <name>S-adenosyl-L-methionine</name>
        <dbReference type="ChEBI" id="CHEBI:59789"/>
    </ligand>
</feature>
<feature type="binding site" evidence="3">
    <location>
        <position position="338"/>
    </location>
    <ligand>
        <name>S-adenosyl-L-methionine</name>
        <dbReference type="ChEBI" id="CHEBI:59789"/>
    </ligand>
</feature>
<feature type="binding site" evidence="3">
    <location>
        <position position="383"/>
    </location>
    <ligand>
        <name>S-adenosyl-L-methionine</name>
        <dbReference type="ChEBI" id="CHEBI:59789"/>
    </ligand>
</feature>
<comment type="similarity">
    <text evidence="3">Belongs to the class I-like SAM-binding methyltransferase superfamily. RNA M5U methyltransferase family.</text>
</comment>
<evidence type="ECO:0000250" key="1"/>
<evidence type="ECO:0000255" key="2">
    <source>
        <dbReference type="PROSITE-ProRule" id="PRU00208"/>
    </source>
</evidence>
<evidence type="ECO:0000255" key="3">
    <source>
        <dbReference type="PROSITE-ProRule" id="PRU01024"/>
    </source>
</evidence>
<accession>Q892Z2</accession>